<reference key="1">
    <citation type="submission" date="2007-03" db="EMBL/GenBank/DDBJ databases">
        <title>Sequencing analysis of Lobularia maritima chloroplast DNA.</title>
        <authorList>
            <person name="Hosouchi T."/>
            <person name="Tsuruoka H."/>
            <person name="Kotani H."/>
        </authorList>
    </citation>
    <scope>NUCLEOTIDE SEQUENCE [LARGE SCALE GENOMIC DNA]</scope>
</reference>
<organism>
    <name type="scientific">Lobularia maritima</name>
    <name type="common">Sweet alyssum</name>
    <name type="synonym">Alyssum maritimum</name>
    <dbReference type="NCBI Taxonomy" id="226051"/>
    <lineage>
        <taxon>Eukaryota</taxon>
        <taxon>Viridiplantae</taxon>
        <taxon>Streptophyta</taxon>
        <taxon>Embryophyta</taxon>
        <taxon>Tracheophyta</taxon>
        <taxon>Spermatophyta</taxon>
        <taxon>Magnoliopsida</taxon>
        <taxon>eudicotyledons</taxon>
        <taxon>Gunneridae</taxon>
        <taxon>Pentapetalae</taxon>
        <taxon>rosids</taxon>
        <taxon>malvids</taxon>
        <taxon>Brassicales</taxon>
        <taxon>Brassicaceae</taxon>
        <taxon>Anastaticeae</taxon>
        <taxon>Lobularia</taxon>
    </lineage>
</organism>
<geneLocation type="chloroplast"/>
<proteinExistence type="inferred from homology"/>
<sequence length="37" mass="4460">MKIRASVRKICEKCRLIRRRGRIIVICSNPRHKQRQG</sequence>
<gene>
    <name evidence="1" type="primary">rpl36</name>
</gene>
<keyword id="KW-0150">Chloroplast</keyword>
<keyword id="KW-0934">Plastid</keyword>
<keyword id="KW-0687">Ribonucleoprotein</keyword>
<keyword id="KW-0689">Ribosomal protein</keyword>
<accession>A4QLM8</accession>
<evidence type="ECO:0000255" key="1">
    <source>
        <dbReference type="HAMAP-Rule" id="MF_00251"/>
    </source>
</evidence>
<evidence type="ECO:0000305" key="2"/>
<protein>
    <recommendedName>
        <fullName evidence="1">Large ribosomal subunit protein bL36c</fullName>
    </recommendedName>
    <alternativeName>
        <fullName evidence="2">50S ribosomal protein L36, chloroplastic</fullName>
    </alternativeName>
</protein>
<comment type="subcellular location">
    <subcellularLocation>
        <location>Plastid</location>
        <location>Chloroplast</location>
    </subcellularLocation>
</comment>
<comment type="similarity">
    <text evidence="1">Belongs to the bacterial ribosomal protein bL36 family.</text>
</comment>
<feature type="chain" id="PRO_0000344768" description="Large ribosomal subunit protein bL36c">
    <location>
        <begin position="1"/>
        <end position="37"/>
    </location>
</feature>
<dbReference type="EMBL" id="AP009375">
    <property type="protein sequence ID" value="BAF50583.1"/>
    <property type="molecule type" value="Genomic_DNA"/>
</dbReference>
<dbReference type="RefSeq" id="YP_001123759.1">
    <property type="nucleotide sequence ID" value="NC_009274.1"/>
</dbReference>
<dbReference type="SMR" id="A4QLM8"/>
<dbReference type="GeneID" id="4964871"/>
<dbReference type="GO" id="GO:0009507">
    <property type="term" value="C:chloroplast"/>
    <property type="evidence" value="ECO:0007669"/>
    <property type="project" value="UniProtKB-SubCell"/>
</dbReference>
<dbReference type="GO" id="GO:1990904">
    <property type="term" value="C:ribonucleoprotein complex"/>
    <property type="evidence" value="ECO:0007669"/>
    <property type="project" value="UniProtKB-KW"/>
</dbReference>
<dbReference type="GO" id="GO:0005840">
    <property type="term" value="C:ribosome"/>
    <property type="evidence" value="ECO:0007669"/>
    <property type="project" value="UniProtKB-KW"/>
</dbReference>
<dbReference type="GO" id="GO:0003735">
    <property type="term" value="F:structural constituent of ribosome"/>
    <property type="evidence" value="ECO:0007669"/>
    <property type="project" value="InterPro"/>
</dbReference>
<dbReference type="GO" id="GO:0006412">
    <property type="term" value="P:translation"/>
    <property type="evidence" value="ECO:0007669"/>
    <property type="project" value="UniProtKB-UniRule"/>
</dbReference>
<dbReference type="HAMAP" id="MF_00251">
    <property type="entry name" value="Ribosomal_bL36"/>
    <property type="match status" value="1"/>
</dbReference>
<dbReference type="InterPro" id="IPR000473">
    <property type="entry name" value="Ribosomal_bL36"/>
</dbReference>
<dbReference type="InterPro" id="IPR035977">
    <property type="entry name" value="Ribosomal_bL36_sp"/>
</dbReference>
<dbReference type="NCBIfam" id="TIGR01022">
    <property type="entry name" value="rpmJ_bact"/>
    <property type="match status" value="1"/>
</dbReference>
<dbReference type="PANTHER" id="PTHR42888">
    <property type="entry name" value="50S RIBOSOMAL PROTEIN L36, CHLOROPLASTIC"/>
    <property type="match status" value="1"/>
</dbReference>
<dbReference type="PANTHER" id="PTHR42888:SF1">
    <property type="entry name" value="LARGE RIBOSOMAL SUBUNIT PROTEIN BL36C"/>
    <property type="match status" value="1"/>
</dbReference>
<dbReference type="Pfam" id="PF00444">
    <property type="entry name" value="Ribosomal_L36"/>
    <property type="match status" value="1"/>
</dbReference>
<dbReference type="SUPFAM" id="SSF57840">
    <property type="entry name" value="Ribosomal protein L36"/>
    <property type="match status" value="1"/>
</dbReference>
<dbReference type="PROSITE" id="PS00828">
    <property type="entry name" value="RIBOSOMAL_L36"/>
    <property type="match status" value="1"/>
</dbReference>
<name>RK36_LOBMA</name>